<proteinExistence type="inferred from homology"/>
<evidence type="ECO:0000255" key="1">
    <source>
        <dbReference type="HAMAP-Rule" id="MF_00090"/>
    </source>
</evidence>
<protein>
    <recommendedName>
        <fullName evidence="1">Protein-L-isoaspartate O-methyltransferase</fullName>
        <ecNumber evidence="1">2.1.1.77</ecNumber>
    </recommendedName>
    <alternativeName>
        <fullName evidence="1">L-isoaspartyl protein carboxyl methyltransferase</fullName>
    </alternativeName>
    <alternativeName>
        <fullName evidence="1">Protein L-isoaspartyl methyltransferase</fullName>
    </alternativeName>
    <alternativeName>
        <fullName evidence="1">Protein-beta-aspartate methyltransferase</fullName>
        <shortName evidence="1">PIMT</shortName>
    </alternativeName>
</protein>
<comment type="function">
    <text evidence="1">Catalyzes the methyl esterification of L-isoaspartyl residues in peptides and proteins that result from spontaneous decomposition of normal L-aspartyl and L-asparaginyl residues. It plays a role in the repair and/or degradation of damaged proteins.</text>
</comment>
<comment type="catalytic activity">
    <reaction evidence="1">
        <text>[protein]-L-isoaspartate + S-adenosyl-L-methionine = [protein]-L-isoaspartate alpha-methyl ester + S-adenosyl-L-homocysteine</text>
        <dbReference type="Rhea" id="RHEA:12705"/>
        <dbReference type="Rhea" id="RHEA-COMP:12143"/>
        <dbReference type="Rhea" id="RHEA-COMP:12144"/>
        <dbReference type="ChEBI" id="CHEBI:57856"/>
        <dbReference type="ChEBI" id="CHEBI:59789"/>
        <dbReference type="ChEBI" id="CHEBI:90596"/>
        <dbReference type="ChEBI" id="CHEBI:90598"/>
        <dbReference type="EC" id="2.1.1.77"/>
    </reaction>
</comment>
<comment type="subcellular location">
    <subcellularLocation>
        <location evidence="1">Cytoplasm</location>
    </subcellularLocation>
</comment>
<comment type="similarity">
    <text evidence="1">Belongs to the methyltransferase superfamily. L-isoaspartyl/D-aspartyl protein methyltransferase family.</text>
</comment>
<keyword id="KW-0963">Cytoplasm</keyword>
<keyword id="KW-0489">Methyltransferase</keyword>
<keyword id="KW-1185">Reference proteome</keyword>
<keyword id="KW-0949">S-adenosyl-L-methionine</keyword>
<keyword id="KW-0808">Transferase</keyword>
<sequence length="208" mass="23258">MVSRRVQALLDQLRAQGIQDEQVLNALAAVPREKFVDEAFEQKAWDNIALPIGQGQTISQPYMVARMTELLELTPQSRVLEIGTGSGYQTAILAHLVQHVCSVERIKGLQWQARRRLKNLDLHNVSTRHGDGWQGWQARAPFDAIIVTAAPPEIPTALMTQLDEGGILVLPVGEEHQYLKRVRRRGGEFIIDTVEAVRFVPLVKGELA</sequence>
<accession>A7ZQI7</accession>
<reference key="1">
    <citation type="journal article" date="2008" name="J. Bacteriol.">
        <title>The pangenome structure of Escherichia coli: comparative genomic analysis of E. coli commensal and pathogenic isolates.</title>
        <authorList>
            <person name="Rasko D.A."/>
            <person name="Rosovitz M.J."/>
            <person name="Myers G.S.A."/>
            <person name="Mongodin E.F."/>
            <person name="Fricke W.F."/>
            <person name="Gajer P."/>
            <person name="Crabtree J."/>
            <person name="Sebaihia M."/>
            <person name="Thomson N.R."/>
            <person name="Chaudhuri R."/>
            <person name="Henderson I.R."/>
            <person name="Sperandio V."/>
            <person name="Ravel J."/>
        </authorList>
    </citation>
    <scope>NUCLEOTIDE SEQUENCE [LARGE SCALE GENOMIC DNA]</scope>
    <source>
        <strain>E24377A / ETEC</strain>
    </source>
</reference>
<organism>
    <name type="scientific">Escherichia coli O139:H28 (strain E24377A / ETEC)</name>
    <dbReference type="NCBI Taxonomy" id="331111"/>
    <lineage>
        <taxon>Bacteria</taxon>
        <taxon>Pseudomonadati</taxon>
        <taxon>Pseudomonadota</taxon>
        <taxon>Gammaproteobacteria</taxon>
        <taxon>Enterobacterales</taxon>
        <taxon>Enterobacteriaceae</taxon>
        <taxon>Escherichia</taxon>
    </lineage>
</organism>
<dbReference type="EC" id="2.1.1.77" evidence="1"/>
<dbReference type="EMBL" id="CP000800">
    <property type="protein sequence ID" value="ABV20098.1"/>
    <property type="molecule type" value="Genomic_DNA"/>
</dbReference>
<dbReference type="RefSeq" id="WP_000254708.1">
    <property type="nucleotide sequence ID" value="NC_009801.1"/>
</dbReference>
<dbReference type="SMR" id="A7ZQI7"/>
<dbReference type="GeneID" id="93779263"/>
<dbReference type="KEGG" id="ecw:EcE24377A_3044"/>
<dbReference type="HOGENOM" id="CLU_055432_2_0_6"/>
<dbReference type="Proteomes" id="UP000001122">
    <property type="component" value="Chromosome"/>
</dbReference>
<dbReference type="GO" id="GO:0005737">
    <property type="term" value="C:cytoplasm"/>
    <property type="evidence" value="ECO:0007669"/>
    <property type="project" value="UniProtKB-SubCell"/>
</dbReference>
<dbReference type="GO" id="GO:0004719">
    <property type="term" value="F:protein-L-isoaspartate (D-aspartate) O-methyltransferase activity"/>
    <property type="evidence" value="ECO:0007669"/>
    <property type="project" value="UniProtKB-UniRule"/>
</dbReference>
<dbReference type="GO" id="GO:0032259">
    <property type="term" value="P:methylation"/>
    <property type="evidence" value="ECO:0007669"/>
    <property type="project" value="UniProtKB-KW"/>
</dbReference>
<dbReference type="GO" id="GO:0036211">
    <property type="term" value="P:protein modification process"/>
    <property type="evidence" value="ECO:0007669"/>
    <property type="project" value="UniProtKB-UniRule"/>
</dbReference>
<dbReference type="GO" id="GO:0030091">
    <property type="term" value="P:protein repair"/>
    <property type="evidence" value="ECO:0007669"/>
    <property type="project" value="UniProtKB-UniRule"/>
</dbReference>
<dbReference type="CDD" id="cd02440">
    <property type="entry name" value="AdoMet_MTases"/>
    <property type="match status" value="1"/>
</dbReference>
<dbReference type="FunFam" id="3.40.50.150:FF:000010">
    <property type="entry name" value="Protein-L-isoaspartate O-methyltransferase"/>
    <property type="match status" value="1"/>
</dbReference>
<dbReference type="Gene3D" id="3.40.50.150">
    <property type="entry name" value="Vaccinia Virus protein VP39"/>
    <property type="match status" value="1"/>
</dbReference>
<dbReference type="HAMAP" id="MF_00090">
    <property type="entry name" value="PIMT"/>
    <property type="match status" value="1"/>
</dbReference>
<dbReference type="InterPro" id="IPR000682">
    <property type="entry name" value="PCMT"/>
</dbReference>
<dbReference type="InterPro" id="IPR029063">
    <property type="entry name" value="SAM-dependent_MTases_sf"/>
</dbReference>
<dbReference type="NCBIfam" id="TIGR00080">
    <property type="entry name" value="pimt"/>
    <property type="match status" value="1"/>
</dbReference>
<dbReference type="NCBIfam" id="NF001453">
    <property type="entry name" value="PRK00312.1"/>
    <property type="match status" value="1"/>
</dbReference>
<dbReference type="PANTHER" id="PTHR11579">
    <property type="entry name" value="PROTEIN-L-ISOASPARTATE O-METHYLTRANSFERASE"/>
    <property type="match status" value="1"/>
</dbReference>
<dbReference type="PANTHER" id="PTHR11579:SF0">
    <property type="entry name" value="PROTEIN-L-ISOASPARTATE(D-ASPARTATE) O-METHYLTRANSFERASE"/>
    <property type="match status" value="1"/>
</dbReference>
<dbReference type="Pfam" id="PF01135">
    <property type="entry name" value="PCMT"/>
    <property type="match status" value="1"/>
</dbReference>
<dbReference type="SUPFAM" id="SSF53335">
    <property type="entry name" value="S-adenosyl-L-methionine-dependent methyltransferases"/>
    <property type="match status" value="1"/>
</dbReference>
<dbReference type="PROSITE" id="PS01279">
    <property type="entry name" value="PCMT"/>
    <property type="match status" value="1"/>
</dbReference>
<feature type="chain" id="PRO_1000057598" description="Protein-L-isoaspartate O-methyltransferase">
    <location>
        <begin position="1"/>
        <end position="208"/>
    </location>
</feature>
<feature type="active site" evidence="1">
    <location>
        <position position="59"/>
    </location>
</feature>
<name>PIMT_ECO24</name>
<gene>
    <name evidence="1" type="primary">pcm</name>
    <name type="ordered locus">EcE24377A_3044</name>
</gene>